<proteinExistence type="inferred from homology"/>
<accession>A2XFT5</accession>
<comment type="function">
    <text evidence="1">Probable glycosyltransferase that may be involved in the biosynthesis of xyloglucan.</text>
</comment>
<comment type="subcellular location">
    <subcellularLocation>
        <location evidence="5">Golgi apparatus membrane</location>
        <topology evidence="5">Single-pass type II membrane protein</topology>
    </subcellularLocation>
</comment>
<comment type="similarity">
    <text evidence="5">Belongs to the glycosyltransferase 34 family.</text>
</comment>
<dbReference type="EC" id="2.4.-.-" evidence="5"/>
<dbReference type="EMBL" id="CM000128">
    <property type="protein sequence ID" value="EAY89695.1"/>
    <property type="molecule type" value="Genomic_DNA"/>
</dbReference>
<dbReference type="SMR" id="A2XFT5"/>
<dbReference type="STRING" id="39946.A2XFT5"/>
<dbReference type="GlyCosmos" id="A2XFT5">
    <property type="glycosylation" value="1 site, No reported glycans"/>
</dbReference>
<dbReference type="EnsemblPlants" id="BGIOSGA010889-TA">
    <property type="protein sequence ID" value="BGIOSGA010889-PA"/>
    <property type="gene ID" value="BGIOSGA010889"/>
</dbReference>
<dbReference type="Gramene" id="BGIOSGA010889-TA">
    <property type="protein sequence ID" value="BGIOSGA010889-PA"/>
    <property type="gene ID" value="BGIOSGA010889"/>
</dbReference>
<dbReference type="HOGENOM" id="CLU_034328_1_1_1"/>
<dbReference type="OMA" id="WQLPRIR"/>
<dbReference type="Proteomes" id="UP000007015">
    <property type="component" value="Chromosome 3"/>
</dbReference>
<dbReference type="GO" id="GO:0005768">
    <property type="term" value="C:endosome"/>
    <property type="evidence" value="ECO:0007669"/>
    <property type="project" value="TreeGrafter"/>
</dbReference>
<dbReference type="GO" id="GO:0000139">
    <property type="term" value="C:Golgi membrane"/>
    <property type="evidence" value="ECO:0007669"/>
    <property type="project" value="UniProtKB-SubCell"/>
</dbReference>
<dbReference type="GO" id="GO:0005802">
    <property type="term" value="C:trans-Golgi network"/>
    <property type="evidence" value="ECO:0007669"/>
    <property type="project" value="TreeGrafter"/>
</dbReference>
<dbReference type="GO" id="GO:0016758">
    <property type="term" value="F:hexosyltransferase activity"/>
    <property type="evidence" value="ECO:0007669"/>
    <property type="project" value="TreeGrafter"/>
</dbReference>
<dbReference type="GO" id="GO:0035252">
    <property type="term" value="F:UDP-xylosyltransferase activity"/>
    <property type="evidence" value="ECO:0007669"/>
    <property type="project" value="TreeGrafter"/>
</dbReference>
<dbReference type="GO" id="GO:0033843">
    <property type="term" value="F:xyloglucan 6-xylosyltransferase activity"/>
    <property type="evidence" value="ECO:0007669"/>
    <property type="project" value="TreeGrafter"/>
</dbReference>
<dbReference type="GO" id="GO:0009969">
    <property type="term" value="P:xyloglucan biosynthetic process"/>
    <property type="evidence" value="ECO:0007669"/>
    <property type="project" value="TreeGrafter"/>
</dbReference>
<dbReference type="FunFam" id="3.90.550.10:FF:000101">
    <property type="entry name" value="Probable glycosyltransferase 5"/>
    <property type="match status" value="1"/>
</dbReference>
<dbReference type="Gene3D" id="3.90.550.10">
    <property type="entry name" value="Spore Coat Polysaccharide Biosynthesis Protein SpsA, Chain A"/>
    <property type="match status" value="1"/>
</dbReference>
<dbReference type="InterPro" id="IPR008630">
    <property type="entry name" value="Glyco_trans_34"/>
</dbReference>
<dbReference type="InterPro" id="IPR029044">
    <property type="entry name" value="Nucleotide-diphossugar_trans"/>
</dbReference>
<dbReference type="PANTHER" id="PTHR31311:SF22">
    <property type="entry name" value="GLYCOSYLTRANSFERASE 4-RELATED"/>
    <property type="match status" value="1"/>
</dbReference>
<dbReference type="PANTHER" id="PTHR31311">
    <property type="entry name" value="XYLOGLUCAN 6-XYLOSYLTRANSFERASE 5-RELATED-RELATED"/>
    <property type="match status" value="1"/>
</dbReference>
<dbReference type="Pfam" id="PF05637">
    <property type="entry name" value="Glyco_transf_34"/>
    <property type="match status" value="1"/>
</dbReference>
<name>GT4_ORYSI</name>
<evidence type="ECO:0000250" key="1">
    <source>
        <dbReference type="UniProtKB" id="Q10MQ0"/>
    </source>
</evidence>
<evidence type="ECO:0000255" key="2"/>
<evidence type="ECO:0000255" key="3">
    <source>
        <dbReference type="PROSITE-ProRule" id="PRU00498"/>
    </source>
</evidence>
<evidence type="ECO:0000256" key="4">
    <source>
        <dbReference type="SAM" id="MobiDB-lite"/>
    </source>
</evidence>
<evidence type="ECO:0000305" key="5"/>
<evidence type="ECO:0000312" key="6">
    <source>
        <dbReference type="EMBL" id="EAY89695.1"/>
    </source>
</evidence>
<keyword id="KW-0325">Glycoprotein</keyword>
<keyword id="KW-0328">Glycosyltransferase</keyword>
<keyword id="KW-0333">Golgi apparatus</keyword>
<keyword id="KW-0472">Membrane</keyword>
<keyword id="KW-1185">Reference proteome</keyword>
<keyword id="KW-0735">Signal-anchor</keyword>
<keyword id="KW-0808">Transferase</keyword>
<keyword id="KW-0812">Transmembrane</keyword>
<keyword id="KW-1133">Transmembrane helix</keyword>
<organism>
    <name type="scientific">Oryza sativa subsp. indica</name>
    <name type="common">Rice</name>
    <dbReference type="NCBI Taxonomy" id="39946"/>
    <lineage>
        <taxon>Eukaryota</taxon>
        <taxon>Viridiplantae</taxon>
        <taxon>Streptophyta</taxon>
        <taxon>Embryophyta</taxon>
        <taxon>Tracheophyta</taxon>
        <taxon>Spermatophyta</taxon>
        <taxon>Magnoliopsida</taxon>
        <taxon>Liliopsida</taxon>
        <taxon>Poales</taxon>
        <taxon>Poaceae</taxon>
        <taxon>BOP clade</taxon>
        <taxon>Oryzoideae</taxon>
        <taxon>Oryzeae</taxon>
        <taxon>Oryzinae</taxon>
        <taxon>Oryza</taxon>
        <taxon>Oryza sativa</taxon>
    </lineage>
</organism>
<protein>
    <recommendedName>
        <fullName evidence="5">Probable glycosyltransferase 4</fullName>
        <ecNumber evidence="5">2.4.-.-</ecNumber>
    </recommendedName>
</protein>
<sequence>MSKLQDRHGGEAAADVGRRARHQRLLLSFPVFPIVLLLLAPCTIFFFTSGDVPLPRIRIEYARRDAPTITAVAADTSPPPPSPPSSSPPPLSFPPPPPPPSSPPPPALPVVDDHSDTQRSLRRLRQLTDSPYTLGPAVTGYDARRAEWLRDHTEFPASVGRGRPRVLMVTGSAPRRCKDPEGDHLLLRALKNKVDYCRVHGFDIFYSNTVLDAEMSGFWTKLPLLRALMLAHPETELLWWVDSDVVFTDMLFEPPWGRYRRHNLVIHGWDGAVYGAKTWLGLNAGSFIIRNCQWSLDLLDAWAPMGPPGPVRDMYGKIFAETLTNRPPYEADDQSALVFLLVTQRHRWGAKVFLENSYNLHGFWADIVDRYEEMRRQWRHPGLGDDRWPLITHFVGCKPCGGDDASYDGERCRRGMDRAFNFADDQILELYGFAHESLDTMAVRRVRNDTGRPLDADNQELGRLLHPTFKARKKKTSRAARPM</sequence>
<feature type="chain" id="PRO_0000434330" description="Probable glycosyltransferase 4">
    <location>
        <begin position="1"/>
        <end position="483"/>
    </location>
</feature>
<feature type="topological domain" description="Cytoplasmic" evidence="5">
    <location>
        <begin position="1"/>
        <end position="26"/>
    </location>
</feature>
<feature type="transmembrane region" description="Helical; Signal-anchor for type II membrane protein" evidence="2">
    <location>
        <begin position="27"/>
        <end position="47"/>
    </location>
</feature>
<feature type="topological domain" description="Lumenal" evidence="5">
    <location>
        <begin position="48"/>
        <end position="483"/>
    </location>
</feature>
<feature type="region of interest" description="Disordered" evidence="4">
    <location>
        <begin position="71"/>
        <end position="119"/>
    </location>
</feature>
<feature type="compositionally biased region" description="Pro residues" evidence="4">
    <location>
        <begin position="77"/>
        <end position="108"/>
    </location>
</feature>
<feature type="glycosylation site" description="N-linked (GlcNAc...) asparagine" evidence="3">
    <location>
        <position position="448"/>
    </location>
</feature>
<reference key="1">
    <citation type="journal article" date="2005" name="PLoS Biol.">
        <title>The genomes of Oryza sativa: a history of duplications.</title>
        <authorList>
            <person name="Yu J."/>
            <person name="Wang J."/>
            <person name="Lin W."/>
            <person name="Li S."/>
            <person name="Li H."/>
            <person name="Zhou J."/>
            <person name="Ni P."/>
            <person name="Dong W."/>
            <person name="Hu S."/>
            <person name="Zeng C."/>
            <person name="Zhang J."/>
            <person name="Zhang Y."/>
            <person name="Li R."/>
            <person name="Xu Z."/>
            <person name="Li S."/>
            <person name="Li X."/>
            <person name="Zheng H."/>
            <person name="Cong L."/>
            <person name="Lin L."/>
            <person name="Yin J."/>
            <person name="Geng J."/>
            <person name="Li G."/>
            <person name="Shi J."/>
            <person name="Liu J."/>
            <person name="Lv H."/>
            <person name="Li J."/>
            <person name="Wang J."/>
            <person name="Deng Y."/>
            <person name="Ran L."/>
            <person name="Shi X."/>
            <person name="Wang X."/>
            <person name="Wu Q."/>
            <person name="Li C."/>
            <person name="Ren X."/>
            <person name="Wang J."/>
            <person name="Wang X."/>
            <person name="Li D."/>
            <person name="Liu D."/>
            <person name="Zhang X."/>
            <person name="Ji Z."/>
            <person name="Zhao W."/>
            <person name="Sun Y."/>
            <person name="Zhang Z."/>
            <person name="Bao J."/>
            <person name="Han Y."/>
            <person name="Dong L."/>
            <person name="Ji J."/>
            <person name="Chen P."/>
            <person name="Wu S."/>
            <person name="Liu J."/>
            <person name="Xiao Y."/>
            <person name="Bu D."/>
            <person name="Tan J."/>
            <person name="Yang L."/>
            <person name="Ye C."/>
            <person name="Zhang J."/>
            <person name="Xu J."/>
            <person name="Zhou Y."/>
            <person name="Yu Y."/>
            <person name="Zhang B."/>
            <person name="Zhuang S."/>
            <person name="Wei H."/>
            <person name="Liu B."/>
            <person name="Lei M."/>
            <person name="Yu H."/>
            <person name="Li Y."/>
            <person name="Xu H."/>
            <person name="Wei S."/>
            <person name="He X."/>
            <person name="Fang L."/>
            <person name="Zhang Z."/>
            <person name="Zhang Y."/>
            <person name="Huang X."/>
            <person name="Su Z."/>
            <person name="Tong W."/>
            <person name="Li J."/>
            <person name="Tong Z."/>
            <person name="Li S."/>
            <person name="Ye J."/>
            <person name="Wang L."/>
            <person name="Fang L."/>
            <person name="Lei T."/>
            <person name="Chen C.-S."/>
            <person name="Chen H.-C."/>
            <person name="Xu Z."/>
            <person name="Li H."/>
            <person name="Huang H."/>
            <person name="Zhang F."/>
            <person name="Xu H."/>
            <person name="Li N."/>
            <person name="Zhao C."/>
            <person name="Li S."/>
            <person name="Dong L."/>
            <person name="Huang Y."/>
            <person name="Li L."/>
            <person name="Xi Y."/>
            <person name="Qi Q."/>
            <person name="Li W."/>
            <person name="Zhang B."/>
            <person name="Hu W."/>
            <person name="Zhang Y."/>
            <person name="Tian X."/>
            <person name="Jiao Y."/>
            <person name="Liang X."/>
            <person name="Jin J."/>
            <person name="Gao L."/>
            <person name="Zheng W."/>
            <person name="Hao B."/>
            <person name="Liu S.-M."/>
            <person name="Wang W."/>
            <person name="Yuan L."/>
            <person name="Cao M."/>
            <person name="McDermott J."/>
            <person name="Samudrala R."/>
            <person name="Wang J."/>
            <person name="Wong G.K.-S."/>
            <person name="Yang H."/>
        </authorList>
    </citation>
    <scope>NUCLEOTIDE SEQUENCE [LARGE SCALE GENOMIC DNA]</scope>
    <source>
        <strain>cv. 93-11</strain>
    </source>
</reference>
<gene>
    <name evidence="5" type="primary">GT4</name>
    <name evidence="6" type="ORF">OsI_11231</name>
</gene>